<dbReference type="EC" id="6.3.1.5" evidence="1"/>
<dbReference type="EMBL" id="BA000034">
    <property type="protein sequence ID" value="BAC63565.1"/>
    <property type="molecule type" value="Genomic_DNA"/>
</dbReference>
<dbReference type="RefSeq" id="WP_011054845.1">
    <property type="nucleotide sequence ID" value="NC_004606.1"/>
</dbReference>
<dbReference type="SMR" id="P0DC65"/>
<dbReference type="GeneID" id="69900480"/>
<dbReference type="KEGG" id="sps:SPs0470"/>
<dbReference type="HOGENOM" id="CLU_059327_3_0_9"/>
<dbReference type="UniPathway" id="UPA00253">
    <property type="reaction ID" value="UER00333"/>
</dbReference>
<dbReference type="GO" id="GO:0005737">
    <property type="term" value="C:cytoplasm"/>
    <property type="evidence" value="ECO:0007669"/>
    <property type="project" value="InterPro"/>
</dbReference>
<dbReference type="GO" id="GO:0005524">
    <property type="term" value="F:ATP binding"/>
    <property type="evidence" value="ECO:0007669"/>
    <property type="project" value="UniProtKB-UniRule"/>
</dbReference>
<dbReference type="GO" id="GO:0004359">
    <property type="term" value="F:glutaminase activity"/>
    <property type="evidence" value="ECO:0007669"/>
    <property type="project" value="InterPro"/>
</dbReference>
<dbReference type="GO" id="GO:0046872">
    <property type="term" value="F:metal ion binding"/>
    <property type="evidence" value="ECO:0007669"/>
    <property type="project" value="UniProtKB-KW"/>
</dbReference>
<dbReference type="GO" id="GO:0003952">
    <property type="term" value="F:NAD+ synthase (glutamine-hydrolyzing) activity"/>
    <property type="evidence" value="ECO:0007669"/>
    <property type="project" value="InterPro"/>
</dbReference>
<dbReference type="GO" id="GO:0008795">
    <property type="term" value="F:NAD+ synthase activity"/>
    <property type="evidence" value="ECO:0007669"/>
    <property type="project" value="UniProtKB-UniRule"/>
</dbReference>
<dbReference type="GO" id="GO:0009435">
    <property type="term" value="P:NAD biosynthetic process"/>
    <property type="evidence" value="ECO:0007669"/>
    <property type="project" value="UniProtKB-UniRule"/>
</dbReference>
<dbReference type="CDD" id="cd00553">
    <property type="entry name" value="NAD_synthase"/>
    <property type="match status" value="1"/>
</dbReference>
<dbReference type="FunFam" id="3.40.50.620:FF:000015">
    <property type="entry name" value="NH(3)-dependent NAD(+) synthetase"/>
    <property type="match status" value="1"/>
</dbReference>
<dbReference type="Gene3D" id="3.40.50.620">
    <property type="entry name" value="HUPs"/>
    <property type="match status" value="1"/>
</dbReference>
<dbReference type="HAMAP" id="MF_00193">
    <property type="entry name" value="NadE_ammonia_dep"/>
    <property type="match status" value="1"/>
</dbReference>
<dbReference type="InterPro" id="IPR022310">
    <property type="entry name" value="NAD/GMP_synthase"/>
</dbReference>
<dbReference type="InterPro" id="IPR003694">
    <property type="entry name" value="NAD_synthase"/>
</dbReference>
<dbReference type="InterPro" id="IPR022926">
    <property type="entry name" value="NH(3)-dep_NAD(+)_synth"/>
</dbReference>
<dbReference type="InterPro" id="IPR014729">
    <property type="entry name" value="Rossmann-like_a/b/a_fold"/>
</dbReference>
<dbReference type="NCBIfam" id="TIGR00552">
    <property type="entry name" value="nadE"/>
    <property type="match status" value="1"/>
</dbReference>
<dbReference type="NCBIfam" id="NF001979">
    <property type="entry name" value="PRK00768.1"/>
    <property type="match status" value="1"/>
</dbReference>
<dbReference type="PANTHER" id="PTHR23090">
    <property type="entry name" value="NH 3 /GLUTAMINE-DEPENDENT NAD + SYNTHETASE"/>
    <property type="match status" value="1"/>
</dbReference>
<dbReference type="PANTHER" id="PTHR23090:SF7">
    <property type="entry name" value="NH(3)-DEPENDENT NAD(+) SYNTHETASE"/>
    <property type="match status" value="1"/>
</dbReference>
<dbReference type="Pfam" id="PF02540">
    <property type="entry name" value="NAD_synthase"/>
    <property type="match status" value="1"/>
</dbReference>
<dbReference type="SUPFAM" id="SSF52402">
    <property type="entry name" value="Adenine nucleotide alpha hydrolases-like"/>
    <property type="match status" value="1"/>
</dbReference>
<proteinExistence type="inferred from homology"/>
<gene>
    <name evidence="1" type="primary">nadE</name>
    <name type="ordered locus">SPs0470</name>
</gene>
<sequence length="274" mass="30181">MTLQEEIIRQLGVKASIAPQEEIRKTVDFLKAYLRKHSFLKTYVLGISGGQDSTLAGKLAQMAIAELREETSDQAYQFIAVRLPYGVQTDEADAQKALAFIMPDQTLTINIKAAVDGQVEALQAAGVEISDFNKGNIKARQRMISQYAIAGQMAGAVIGTDHAAENITGFFTKFGDGGADILPLFRLNKRQGKALLKVLGADAALYEKVPTADLEDQKPGLADEVALGVTYQDIDDYLEGKLISKVAQATIEKWWHKGQHKRHLPITIFDDFWK</sequence>
<name>NADE_STRPQ</name>
<feature type="chain" id="PRO_0000411420" description="NH(3)-dependent NAD(+) synthetase">
    <location>
        <begin position="1"/>
        <end position="274"/>
    </location>
</feature>
<feature type="binding site" evidence="1">
    <location>
        <begin position="46"/>
        <end position="53"/>
    </location>
    <ligand>
        <name>ATP</name>
        <dbReference type="ChEBI" id="CHEBI:30616"/>
    </ligand>
</feature>
<feature type="binding site" evidence="1">
    <location>
        <position position="52"/>
    </location>
    <ligand>
        <name>Mg(2+)</name>
        <dbReference type="ChEBI" id="CHEBI:18420"/>
    </ligand>
</feature>
<feature type="binding site" evidence="1">
    <location>
        <position position="140"/>
    </location>
    <ligand>
        <name>deamido-NAD(+)</name>
        <dbReference type="ChEBI" id="CHEBI:58437"/>
    </ligand>
</feature>
<feature type="binding site" evidence="1">
    <location>
        <position position="160"/>
    </location>
    <ligand>
        <name>ATP</name>
        <dbReference type="ChEBI" id="CHEBI:30616"/>
    </ligand>
</feature>
<feature type="binding site" evidence="1">
    <location>
        <position position="165"/>
    </location>
    <ligand>
        <name>Mg(2+)</name>
        <dbReference type="ChEBI" id="CHEBI:18420"/>
    </ligand>
</feature>
<feature type="binding site" evidence="1">
    <location>
        <position position="173"/>
    </location>
    <ligand>
        <name>deamido-NAD(+)</name>
        <dbReference type="ChEBI" id="CHEBI:58437"/>
    </ligand>
</feature>
<feature type="binding site" evidence="1">
    <location>
        <position position="180"/>
    </location>
    <ligand>
        <name>deamido-NAD(+)</name>
        <dbReference type="ChEBI" id="CHEBI:58437"/>
    </ligand>
</feature>
<feature type="binding site" evidence="1">
    <location>
        <position position="189"/>
    </location>
    <ligand>
        <name>ATP</name>
        <dbReference type="ChEBI" id="CHEBI:30616"/>
    </ligand>
</feature>
<feature type="binding site" evidence="1">
    <location>
        <position position="211"/>
    </location>
    <ligand>
        <name>ATP</name>
        <dbReference type="ChEBI" id="CHEBI:30616"/>
    </ligand>
</feature>
<feature type="binding site" evidence="1">
    <location>
        <begin position="260"/>
        <end position="261"/>
    </location>
    <ligand>
        <name>deamido-NAD(+)</name>
        <dbReference type="ChEBI" id="CHEBI:58437"/>
    </ligand>
</feature>
<accession>P0DC65</accession>
<accession>Q8K6D4</accession>
<protein>
    <recommendedName>
        <fullName evidence="1">NH(3)-dependent NAD(+) synthetase</fullName>
        <ecNumber evidence="1">6.3.1.5</ecNumber>
    </recommendedName>
</protein>
<reference key="1">
    <citation type="journal article" date="2003" name="Genome Res.">
        <title>Genome sequence of an M3 strain of Streptococcus pyogenes reveals a large-scale genomic rearrangement in invasive strains and new insights into phage evolution.</title>
        <authorList>
            <person name="Nakagawa I."/>
            <person name="Kurokawa K."/>
            <person name="Yamashita A."/>
            <person name="Nakata M."/>
            <person name="Tomiyasu Y."/>
            <person name="Okahashi N."/>
            <person name="Kawabata S."/>
            <person name="Yamazaki K."/>
            <person name="Shiba T."/>
            <person name="Yasunaga T."/>
            <person name="Hayashi H."/>
            <person name="Hattori M."/>
            <person name="Hamada S."/>
        </authorList>
    </citation>
    <scope>NUCLEOTIDE SEQUENCE [LARGE SCALE GENOMIC DNA]</scope>
    <source>
        <strain>SSI-1</strain>
    </source>
</reference>
<comment type="function">
    <text evidence="1">Catalyzes the ATP-dependent amidation of deamido-NAD to form NAD. Uses ammonia as a nitrogen source.</text>
</comment>
<comment type="catalytic activity">
    <reaction evidence="1">
        <text>deamido-NAD(+) + NH4(+) + ATP = AMP + diphosphate + NAD(+) + H(+)</text>
        <dbReference type="Rhea" id="RHEA:21188"/>
        <dbReference type="ChEBI" id="CHEBI:15378"/>
        <dbReference type="ChEBI" id="CHEBI:28938"/>
        <dbReference type="ChEBI" id="CHEBI:30616"/>
        <dbReference type="ChEBI" id="CHEBI:33019"/>
        <dbReference type="ChEBI" id="CHEBI:57540"/>
        <dbReference type="ChEBI" id="CHEBI:58437"/>
        <dbReference type="ChEBI" id="CHEBI:456215"/>
        <dbReference type="EC" id="6.3.1.5"/>
    </reaction>
</comment>
<comment type="pathway">
    <text evidence="1">Cofactor biosynthesis; NAD(+) biosynthesis; NAD(+) from deamido-NAD(+) (ammonia route): step 1/1.</text>
</comment>
<comment type="subunit">
    <text evidence="1">Homodimer.</text>
</comment>
<comment type="similarity">
    <text evidence="1">Belongs to the NAD synthetase family.</text>
</comment>
<keyword id="KW-0067">ATP-binding</keyword>
<keyword id="KW-0436">Ligase</keyword>
<keyword id="KW-0460">Magnesium</keyword>
<keyword id="KW-0479">Metal-binding</keyword>
<keyword id="KW-0520">NAD</keyword>
<keyword id="KW-0547">Nucleotide-binding</keyword>
<organism>
    <name type="scientific">Streptococcus pyogenes serotype M3 (strain SSI-1)</name>
    <dbReference type="NCBI Taxonomy" id="193567"/>
    <lineage>
        <taxon>Bacteria</taxon>
        <taxon>Bacillati</taxon>
        <taxon>Bacillota</taxon>
        <taxon>Bacilli</taxon>
        <taxon>Lactobacillales</taxon>
        <taxon>Streptococcaceae</taxon>
        <taxon>Streptococcus</taxon>
    </lineage>
</organism>
<evidence type="ECO:0000255" key="1">
    <source>
        <dbReference type="HAMAP-Rule" id="MF_00193"/>
    </source>
</evidence>